<proteinExistence type="inferred from homology"/>
<name>SYA_RUBXD</name>
<feature type="chain" id="PRO_0000347770" description="Alanine--tRNA ligase">
    <location>
        <begin position="1"/>
        <end position="882"/>
    </location>
</feature>
<feature type="binding site" evidence="1">
    <location>
        <position position="564"/>
    </location>
    <ligand>
        <name>Zn(2+)</name>
        <dbReference type="ChEBI" id="CHEBI:29105"/>
    </ligand>
</feature>
<feature type="binding site" evidence="1">
    <location>
        <position position="568"/>
    </location>
    <ligand>
        <name>Zn(2+)</name>
        <dbReference type="ChEBI" id="CHEBI:29105"/>
    </ligand>
</feature>
<feature type="binding site" evidence="1">
    <location>
        <position position="666"/>
    </location>
    <ligand>
        <name>Zn(2+)</name>
        <dbReference type="ChEBI" id="CHEBI:29105"/>
    </ligand>
</feature>
<feature type="binding site" evidence="1">
    <location>
        <position position="670"/>
    </location>
    <ligand>
        <name>Zn(2+)</name>
        <dbReference type="ChEBI" id="CHEBI:29105"/>
    </ligand>
</feature>
<reference key="1">
    <citation type="submission" date="2006-06" db="EMBL/GenBank/DDBJ databases">
        <title>Complete sequence of Rubrobacter xylanophilus DSM 9941.</title>
        <authorList>
            <consortium name="US DOE Joint Genome Institute"/>
            <person name="Copeland A."/>
            <person name="Lucas S."/>
            <person name="Lapidus A."/>
            <person name="Barry K."/>
            <person name="Detter J.C."/>
            <person name="Glavina del Rio T."/>
            <person name="Hammon N."/>
            <person name="Israni S."/>
            <person name="Dalin E."/>
            <person name="Tice H."/>
            <person name="Pitluck S."/>
            <person name="Munk A.C."/>
            <person name="Brettin T."/>
            <person name="Bruce D."/>
            <person name="Han C."/>
            <person name="Tapia R."/>
            <person name="Gilna P."/>
            <person name="Schmutz J."/>
            <person name="Larimer F."/>
            <person name="Land M."/>
            <person name="Hauser L."/>
            <person name="Kyrpides N."/>
            <person name="Lykidis A."/>
            <person name="da Costa M.S."/>
            <person name="Rainey F.A."/>
            <person name="Empadinhas N."/>
            <person name="Jolivet E."/>
            <person name="Battista J.R."/>
            <person name="Richardson P."/>
        </authorList>
    </citation>
    <scope>NUCLEOTIDE SEQUENCE [LARGE SCALE GENOMIC DNA]</scope>
    <source>
        <strain>DSM 9941 / JCM 11954 / NBRC 16129 / PRD-1</strain>
    </source>
</reference>
<sequence>MEHMKSAEIRRRFLDFFAERDHRIYPSSSLIPHDDPTVLLTTAGVQQFIPYFLGQEKPPHPRAASVQKCFRTQDLEEVGDPSHLTFFEMLGNFSFGDYFKKEAIGWAWEFLTEGLGIPPERLWVTIFEGDENAPEDLEAKRFWMEVGVPEHKIFGLPKSENWWGPAGETGPCGPCSEIYYDYGEEFGPGDPLEDARYGPGGEEGDARFLEVWNLVFNQYEQLRDGSLRPLEQTGIDTGMGLERIAAVMQGARSVYETDLYAPVIERAREYTGVALGDGEETDRALRILADHARGMAFLIADGVRPGNQRREYVLRRIIRRATREAYGRFGLDAGRIASLAETVADYMGGFWGELREARDEIRRVVESEAARFIDIYHSGMRLLEAEISRLEGGRFPGEVAFTLHDTYGFPVEVTREVLAERGISLDEAGFRRAMERQRERAREALEGHERAVAAFRDREIRSRFVGYEREQAETRILAIEPVPDAEGELYLVLEENPFYATGGGQVADTGWISSEKGQLEVVDAIPAGDYQVLRARVERGRFEAGDEVVASINRVRRQQIEANHTATHILHWALRAVLGKEVVQAGSYVGPDRLRFDYRYSGRVTEEELARVQELCLLKITENQPVRYYTTTLEEARKLGAIMLFGEKYGELVRVVEVDGFSRELCGGTHVRGTAEIGAFKITSNRRHGADLYRIEVITGREALYYLTRAAETAERLAAELRLPGVEELPEAVSRLREELQQAREELRQQALKRGLEEVGSLVENAESIDGTKVVTGRVAAADVRDLRQISDDVRNRVGGPVAVVLAADLDGKAVLVANFHPEVSKRVKAGDVVREAAGILGGGGGGSPTMAQAGGGNLEAIPAALERVRQILSRELSGREA</sequence>
<evidence type="ECO:0000255" key="1">
    <source>
        <dbReference type="HAMAP-Rule" id="MF_00036"/>
    </source>
</evidence>
<keyword id="KW-0030">Aminoacyl-tRNA synthetase</keyword>
<keyword id="KW-0067">ATP-binding</keyword>
<keyword id="KW-0963">Cytoplasm</keyword>
<keyword id="KW-0436">Ligase</keyword>
<keyword id="KW-0479">Metal-binding</keyword>
<keyword id="KW-0547">Nucleotide-binding</keyword>
<keyword id="KW-0648">Protein biosynthesis</keyword>
<keyword id="KW-1185">Reference proteome</keyword>
<keyword id="KW-0694">RNA-binding</keyword>
<keyword id="KW-0820">tRNA-binding</keyword>
<keyword id="KW-0862">Zinc</keyword>
<comment type="function">
    <text evidence="1">Catalyzes the attachment of alanine to tRNA(Ala) in a two-step reaction: alanine is first activated by ATP to form Ala-AMP and then transferred to the acceptor end of tRNA(Ala). Also edits incorrectly charged Ser-tRNA(Ala) and Gly-tRNA(Ala) via its editing domain.</text>
</comment>
<comment type="catalytic activity">
    <reaction evidence="1">
        <text>tRNA(Ala) + L-alanine + ATP = L-alanyl-tRNA(Ala) + AMP + diphosphate</text>
        <dbReference type="Rhea" id="RHEA:12540"/>
        <dbReference type="Rhea" id="RHEA-COMP:9657"/>
        <dbReference type="Rhea" id="RHEA-COMP:9923"/>
        <dbReference type="ChEBI" id="CHEBI:30616"/>
        <dbReference type="ChEBI" id="CHEBI:33019"/>
        <dbReference type="ChEBI" id="CHEBI:57972"/>
        <dbReference type="ChEBI" id="CHEBI:78442"/>
        <dbReference type="ChEBI" id="CHEBI:78497"/>
        <dbReference type="ChEBI" id="CHEBI:456215"/>
        <dbReference type="EC" id="6.1.1.7"/>
    </reaction>
</comment>
<comment type="cofactor">
    <cofactor evidence="1">
        <name>Zn(2+)</name>
        <dbReference type="ChEBI" id="CHEBI:29105"/>
    </cofactor>
    <text evidence="1">Binds 1 zinc ion per subunit.</text>
</comment>
<comment type="subcellular location">
    <subcellularLocation>
        <location evidence="1">Cytoplasm</location>
    </subcellularLocation>
</comment>
<comment type="domain">
    <text evidence="1">Consists of three domains; the N-terminal catalytic domain, the editing domain and the C-terminal C-Ala domain. The editing domain removes incorrectly charged amino acids, while the C-Ala domain, along with tRNA(Ala), serves as a bridge to cooperatively bring together the editing and aminoacylation centers thus stimulating deacylation of misacylated tRNAs.</text>
</comment>
<comment type="similarity">
    <text evidence="1">Belongs to the class-II aminoacyl-tRNA synthetase family.</text>
</comment>
<gene>
    <name evidence="1" type="primary">alaS</name>
    <name type="ordered locus">Rxyl_1359</name>
</gene>
<protein>
    <recommendedName>
        <fullName evidence="1">Alanine--tRNA ligase</fullName>
        <ecNumber evidence="1">6.1.1.7</ecNumber>
    </recommendedName>
    <alternativeName>
        <fullName evidence="1">Alanyl-tRNA synthetase</fullName>
        <shortName evidence="1">AlaRS</shortName>
    </alternativeName>
</protein>
<dbReference type="EC" id="6.1.1.7" evidence="1"/>
<dbReference type="EMBL" id="CP000386">
    <property type="protein sequence ID" value="ABG04322.1"/>
    <property type="molecule type" value="Genomic_DNA"/>
</dbReference>
<dbReference type="RefSeq" id="WP_011564339.1">
    <property type="nucleotide sequence ID" value="NC_008148.1"/>
</dbReference>
<dbReference type="SMR" id="Q1AWA6"/>
<dbReference type="STRING" id="266117.Rxyl_1359"/>
<dbReference type="KEGG" id="rxy:Rxyl_1359"/>
<dbReference type="eggNOG" id="COG0013">
    <property type="taxonomic scope" value="Bacteria"/>
</dbReference>
<dbReference type="HOGENOM" id="CLU_004485_1_1_11"/>
<dbReference type="OrthoDB" id="9803884at2"/>
<dbReference type="PhylomeDB" id="Q1AWA6"/>
<dbReference type="Proteomes" id="UP000006637">
    <property type="component" value="Chromosome"/>
</dbReference>
<dbReference type="GO" id="GO:0005829">
    <property type="term" value="C:cytosol"/>
    <property type="evidence" value="ECO:0007669"/>
    <property type="project" value="TreeGrafter"/>
</dbReference>
<dbReference type="GO" id="GO:0004813">
    <property type="term" value="F:alanine-tRNA ligase activity"/>
    <property type="evidence" value="ECO:0007669"/>
    <property type="project" value="UniProtKB-UniRule"/>
</dbReference>
<dbReference type="GO" id="GO:0002161">
    <property type="term" value="F:aminoacyl-tRNA deacylase activity"/>
    <property type="evidence" value="ECO:0007669"/>
    <property type="project" value="TreeGrafter"/>
</dbReference>
<dbReference type="GO" id="GO:0005524">
    <property type="term" value="F:ATP binding"/>
    <property type="evidence" value="ECO:0007669"/>
    <property type="project" value="UniProtKB-UniRule"/>
</dbReference>
<dbReference type="GO" id="GO:0000049">
    <property type="term" value="F:tRNA binding"/>
    <property type="evidence" value="ECO:0007669"/>
    <property type="project" value="UniProtKB-KW"/>
</dbReference>
<dbReference type="GO" id="GO:0008270">
    <property type="term" value="F:zinc ion binding"/>
    <property type="evidence" value="ECO:0007669"/>
    <property type="project" value="UniProtKB-UniRule"/>
</dbReference>
<dbReference type="GO" id="GO:0006419">
    <property type="term" value="P:alanyl-tRNA aminoacylation"/>
    <property type="evidence" value="ECO:0007669"/>
    <property type="project" value="UniProtKB-UniRule"/>
</dbReference>
<dbReference type="CDD" id="cd00673">
    <property type="entry name" value="AlaRS_core"/>
    <property type="match status" value="1"/>
</dbReference>
<dbReference type="FunFam" id="3.10.310.40:FF:000001">
    <property type="entry name" value="Alanine--tRNA ligase"/>
    <property type="match status" value="1"/>
</dbReference>
<dbReference type="FunFam" id="3.30.54.20:FF:000001">
    <property type="entry name" value="Alanine--tRNA ligase"/>
    <property type="match status" value="1"/>
</dbReference>
<dbReference type="FunFam" id="3.30.980.10:FF:000004">
    <property type="entry name" value="Alanine--tRNA ligase, cytoplasmic"/>
    <property type="match status" value="1"/>
</dbReference>
<dbReference type="Gene3D" id="2.40.30.130">
    <property type="match status" value="1"/>
</dbReference>
<dbReference type="Gene3D" id="3.10.310.40">
    <property type="match status" value="1"/>
</dbReference>
<dbReference type="Gene3D" id="3.30.930.10">
    <property type="entry name" value="Bira Bifunctional Protein, Domain 2"/>
    <property type="match status" value="1"/>
</dbReference>
<dbReference type="Gene3D" id="3.30.980.10">
    <property type="entry name" value="Threonyl-trna Synthetase, Chain A, domain 2"/>
    <property type="match status" value="1"/>
</dbReference>
<dbReference type="HAMAP" id="MF_00036_B">
    <property type="entry name" value="Ala_tRNA_synth_B"/>
    <property type="match status" value="1"/>
</dbReference>
<dbReference type="InterPro" id="IPR045864">
    <property type="entry name" value="aa-tRNA-synth_II/BPL/LPL"/>
</dbReference>
<dbReference type="InterPro" id="IPR002318">
    <property type="entry name" value="Ala-tRNA-lgiase_IIc"/>
</dbReference>
<dbReference type="InterPro" id="IPR018162">
    <property type="entry name" value="Ala-tRNA-ligase_IIc_anticod-bd"/>
</dbReference>
<dbReference type="InterPro" id="IPR018165">
    <property type="entry name" value="Ala-tRNA-synth_IIc_core"/>
</dbReference>
<dbReference type="InterPro" id="IPR018164">
    <property type="entry name" value="Ala-tRNA-synth_IIc_N"/>
</dbReference>
<dbReference type="InterPro" id="IPR050058">
    <property type="entry name" value="Ala-tRNA_ligase"/>
</dbReference>
<dbReference type="InterPro" id="IPR023033">
    <property type="entry name" value="Ala_tRNA_ligase_euk/bac"/>
</dbReference>
<dbReference type="InterPro" id="IPR003156">
    <property type="entry name" value="DHHA1_dom"/>
</dbReference>
<dbReference type="InterPro" id="IPR018163">
    <property type="entry name" value="Thr/Ala-tRNA-synth_IIc_edit"/>
</dbReference>
<dbReference type="InterPro" id="IPR009000">
    <property type="entry name" value="Transl_B-barrel_sf"/>
</dbReference>
<dbReference type="InterPro" id="IPR012947">
    <property type="entry name" value="tRNA_SAD"/>
</dbReference>
<dbReference type="NCBIfam" id="TIGR00344">
    <property type="entry name" value="alaS"/>
    <property type="match status" value="1"/>
</dbReference>
<dbReference type="PANTHER" id="PTHR11777:SF9">
    <property type="entry name" value="ALANINE--TRNA LIGASE, CYTOPLASMIC"/>
    <property type="match status" value="1"/>
</dbReference>
<dbReference type="PANTHER" id="PTHR11777">
    <property type="entry name" value="ALANYL-TRNA SYNTHETASE"/>
    <property type="match status" value="1"/>
</dbReference>
<dbReference type="Pfam" id="PF02272">
    <property type="entry name" value="DHHA1"/>
    <property type="match status" value="1"/>
</dbReference>
<dbReference type="Pfam" id="PF01411">
    <property type="entry name" value="tRNA-synt_2c"/>
    <property type="match status" value="1"/>
</dbReference>
<dbReference type="Pfam" id="PF07973">
    <property type="entry name" value="tRNA_SAD"/>
    <property type="match status" value="1"/>
</dbReference>
<dbReference type="PRINTS" id="PR00980">
    <property type="entry name" value="TRNASYNTHALA"/>
</dbReference>
<dbReference type="SMART" id="SM00863">
    <property type="entry name" value="tRNA_SAD"/>
    <property type="match status" value="1"/>
</dbReference>
<dbReference type="SUPFAM" id="SSF55681">
    <property type="entry name" value="Class II aaRS and biotin synthetases"/>
    <property type="match status" value="1"/>
</dbReference>
<dbReference type="SUPFAM" id="SSF101353">
    <property type="entry name" value="Putative anticodon-binding domain of alanyl-tRNA synthetase (AlaRS)"/>
    <property type="match status" value="1"/>
</dbReference>
<dbReference type="SUPFAM" id="SSF55186">
    <property type="entry name" value="ThrRS/AlaRS common domain"/>
    <property type="match status" value="1"/>
</dbReference>
<dbReference type="SUPFAM" id="SSF50447">
    <property type="entry name" value="Translation proteins"/>
    <property type="match status" value="1"/>
</dbReference>
<dbReference type="PROSITE" id="PS50860">
    <property type="entry name" value="AA_TRNA_LIGASE_II_ALA"/>
    <property type="match status" value="1"/>
</dbReference>
<accession>Q1AWA6</accession>
<organism>
    <name type="scientific">Rubrobacter xylanophilus (strain DSM 9941 / JCM 11954 / NBRC 16129 / PRD-1)</name>
    <dbReference type="NCBI Taxonomy" id="266117"/>
    <lineage>
        <taxon>Bacteria</taxon>
        <taxon>Bacillati</taxon>
        <taxon>Actinomycetota</taxon>
        <taxon>Rubrobacteria</taxon>
        <taxon>Rubrobacterales</taxon>
        <taxon>Rubrobacteraceae</taxon>
        <taxon>Rubrobacter</taxon>
    </lineage>
</organism>